<organism>
    <name type="scientific">Salmonella schwarzengrund (strain CVM19633)</name>
    <dbReference type="NCBI Taxonomy" id="439843"/>
    <lineage>
        <taxon>Bacteria</taxon>
        <taxon>Pseudomonadati</taxon>
        <taxon>Pseudomonadota</taxon>
        <taxon>Gammaproteobacteria</taxon>
        <taxon>Enterobacterales</taxon>
        <taxon>Enterobacteriaceae</taxon>
        <taxon>Salmonella</taxon>
    </lineage>
</organism>
<accession>B4TX73</accession>
<name>AAEA_SALSV</name>
<dbReference type="EMBL" id="CP001127">
    <property type="protein sequence ID" value="ACF89433.1"/>
    <property type="molecule type" value="Genomic_DNA"/>
</dbReference>
<dbReference type="RefSeq" id="WP_000855138.1">
    <property type="nucleotide sequence ID" value="NC_011094.1"/>
</dbReference>
<dbReference type="SMR" id="B4TX73"/>
<dbReference type="KEGG" id="sew:SeSA_A3557"/>
<dbReference type="HOGENOM" id="CLU_018816_15_2_6"/>
<dbReference type="Proteomes" id="UP000001865">
    <property type="component" value="Chromosome"/>
</dbReference>
<dbReference type="GO" id="GO:0005886">
    <property type="term" value="C:plasma membrane"/>
    <property type="evidence" value="ECO:0007669"/>
    <property type="project" value="UniProtKB-SubCell"/>
</dbReference>
<dbReference type="GO" id="GO:0022857">
    <property type="term" value="F:transmembrane transporter activity"/>
    <property type="evidence" value="ECO:0007669"/>
    <property type="project" value="UniProtKB-UniRule"/>
</dbReference>
<dbReference type="FunFam" id="2.40.30.170:FF:000002">
    <property type="entry name" value="p-hydroxybenzoic acid efflux pump subunit AaeA"/>
    <property type="match status" value="1"/>
</dbReference>
<dbReference type="Gene3D" id="2.40.30.170">
    <property type="match status" value="1"/>
</dbReference>
<dbReference type="Gene3D" id="2.40.50.100">
    <property type="match status" value="1"/>
</dbReference>
<dbReference type="HAMAP" id="MF_01544">
    <property type="entry name" value="AaeA"/>
    <property type="match status" value="1"/>
</dbReference>
<dbReference type="InterPro" id="IPR043602">
    <property type="entry name" value="CusB-like_dom_1"/>
</dbReference>
<dbReference type="InterPro" id="IPR032317">
    <property type="entry name" value="CusB_D23"/>
</dbReference>
<dbReference type="InterPro" id="IPR050393">
    <property type="entry name" value="MFP_Efflux_Pump"/>
</dbReference>
<dbReference type="InterPro" id="IPR022871">
    <property type="entry name" value="PHBA_efflux_pump_AaeA"/>
</dbReference>
<dbReference type="InterPro" id="IPR006143">
    <property type="entry name" value="RND_pump_MFP"/>
</dbReference>
<dbReference type="NCBIfam" id="NF007850">
    <property type="entry name" value="PRK10559.1"/>
    <property type="match status" value="1"/>
</dbReference>
<dbReference type="NCBIfam" id="TIGR01730">
    <property type="entry name" value="RND_mfp"/>
    <property type="match status" value="1"/>
</dbReference>
<dbReference type="PANTHER" id="PTHR30367:SF12">
    <property type="entry name" value="P-HYDROXYBENZOIC ACID EFFLUX PUMP SUBUNIT AAEA"/>
    <property type="match status" value="1"/>
</dbReference>
<dbReference type="PANTHER" id="PTHR30367">
    <property type="entry name" value="P-HYDROXYBENZOIC ACID EFFLUX PUMP SUBUNIT AAEA-RELATED"/>
    <property type="match status" value="1"/>
</dbReference>
<dbReference type="Pfam" id="PF00529">
    <property type="entry name" value="CusB_dom_1"/>
    <property type="match status" value="1"/>
</dbReference>
<dbReference type="Pfam" id="PF16576">
    <property type="entry name" value="HlyD_D23"/>
    <property type="match status" value="1"/>
</dbReference>
<dbReference type="SUPFAM" id="SSF111369">
    <property type="entry name" value="HlyD-like secretion proteins"/>
    <property type="match status" value="1"/>
</dbReference>
<feature type="chain" id="PRO_1000146729" description="p-hydroxybenzoic acid efflux pump subunit AaeA">
    <location>
        <begin position="1"/>
        <end position="310"/>
    </location>
</feature>
<feature type="transmembrane region" description="Helical" evidence="1">
    <location>
        <begin position="12"/>
        <end position="32"/>
    </location>
</feature>
<sequence length="310" mass="34575">MKTLTRKLSRTAITLVLVILAFIAIFRAWVYYTESPWTRDARFSADVVAIAPDVAGLITHVNVHDNQLVKKDQVLFTIDQPRYQKALAEAEADVAYYQVLAQEKRQEASRRNRLGVQAMSREEIDQANNVLQTVLHQLAKAQATRDLAKLDLERTVIRAPADGWVTNLNVYAGEFITRGSTAVALVKKNSFYVQAYMEETKLEGVRPGYRAEITPLGSNRVLKGTVDSVAAGVTNASSTSDAKGMATIDSNLEWVRLAQRVPVRIRLDEQQGNLWPAGTTATVVITGKQDRDASQDSFFRKLAHRLREFG</sequence>
<proteinExistence type="inferred from homology"/>
<protein>
    <recommendedName>
        <fullName evidence="1">p-hydroxybenzoic acid efflux pump subunit AaeA</fullName>
        <shortName evidence="1">pHBA efflux pump protein A</shortName>
    </recommendedName>
</protein>
<gene>
    <name evidence="1" type="primary">aaeA</name>
    <name type="ordered locus">SeSA_A3557</name>
</gene>
<reference key="1">
    <citation type="journal article" date="2011" name="J. Bacteriol.">
        <title>Comparative genomics of 28 Salmonella enterica isolates: evidence for CRISPR-mediated adaptive sublineage evolution.</title>
        <authorList>
            <person name="Fricke W.F."/>
            <person name="Mammel M.K."/>
            <person name="McDermott P.F."/>
            <person name="Tartera C."/>
            <person name="White D.G."/>
            <person name="Leclerc J.E."/>
            <person name="Ravel J."/>
            <person name="Cebula T.A."/>
        </authorList>
    </citation>
    <scope>NUCLEOTIDE SEQUENCE [LARGE SCALE GENOMIC DNA]</scope>
    <source>
        <strain>CVM19633</strain>
    </source>
</reference>
<keyword id="KW-0997">Cell inner membrane</keyword>
<keyword id="KW-1003">Cell membrane</keyword>
<keyword id="KW-0472">Membrane</keyword>
<keyword id="KW-0812">Transmembrane</keyword>
<keyword id="KW-1133">Transmembrane helix</keyword>
<keyword id="KW-0813">Transport</keyword>
<comment type="function">
    <text evidence="1">Forms an efflux pump with AaeB.</text>
</comment>
<comment type="subcellular location">
    <subcellularLocation>
        <location evidence="1">Cell inner membrane</location>
        <topology evidence="1">Single-pass membrane protein</topology>
    </subcellularLocation>
</comment>
<comment type="similarity">
    <text evidence="1">Belongs to the membrane fusion protein (MFP) (TC 8.A.1) family.</text>
</comment>
<evidence type="ECO:0000255" key="1">
    <source>
        <dbReference type="HAMAP-Rule" id="MF_01544"/>
    </source>
</evidence>